<evidence type="ECO:0000255" key="1">
    <source>
        <dbReference type="HAMAP-Rule" id="MF_00017"/>
    </source>
</evidence>
<protein>
    <recommendedName>
        <fullName evidence="1">Recombination protein RecR</fullName>
    </recommendedName>
</protein>
<keyword id="KW-0227">DNA damage</keyword>
<keyword id="KW-0233">DNA recombination</keyword>
<keyword id="KW-0234">DNA repair</keyword>
<keyword id="KW-0479">Metal-binding</keyword>
<keyword id="KW-1185">Reference proteome</keyword>
<keyword id="KW-0862">Zinc</keyword>
<keyword id="KW-0863">Zinc-finger</keyword>
<reference key="1">
    <citation type="journal article" date="2011" name="BMC Genomics">
        <title>Complete genome sequence of the filamentous anoxygenic phototrophic bacterium Chloroflexus aurantiacus.</title>
        <authorList>
            <person name="Tang K.H."/>
            <person name="Barry K."/>
            <person name="Chertkov O."/>
            <person name="Dalin E."/>
            <person name="Han C.S."/>
            <person name="Hauser L.J."/>
            <person name="Honchak B.M."/>
            <person name="Karbach L.E."/>
            <person name="Land M.L."/>
            <person name="Lapidus A."/>
            <person name="Larimer F.W."/>
            <person name="Mikhailova N."/>
            <person name="Pitluck S."/>
            <person name="Pierson B.K."/>
            <person name="Blankenship R.E."/>
        </authorList>
    </citation>
    <scope>NUCLEOTIDE SEQUENCE [LARGE SCALE GENOMIC DNA]</scope>
    <source>
        <strain>ATCC 29366 / DSM 635 / J-10-fl</strain>
    </source>
</reference>
<organism>
    <name type="scientific">Chloroflexus aurantiacus (strain ATCC 29366 / DSM 635 / J-10-fl)</name>
    <dbReference type="NCBI Taxonomy" id="324602"/>
    <lineage>
        <taxon>Bacteria</taxon>
        <taxon>Bacillati</taxon>
        <taxon>Chloroflexota</taxon>
        <taxon>Chloroflexia</taxon>
        <taxon>Chloroflexales</taxon>
        <taxon>Chloroflexineae</taxon>
        <taxon>Chloroflexaceae</taxon>
        <taxon>Chloroflexus</taxon>
    </lineage>
</organism>
<accession>A9WEA8</accession>
<comment type="function">
    <text evidence="1">May play a role in DNA repair. It seems to be involved in an RecBC-independent recombinational process of DNA repair. It may act with RecF and RecO.</text>
</comment>
<comment type="similarity">
    <text evidence="1">Belongs to the RecR family.</text>
</comment>
<name>RECR_CHLAA</name>
<proteinExistence type="inferred from homology"/>
<dbReference type="EMBL" id="CP000909">
    <property type="protein sequence ID" value="ABY33768.1"/>
    <property type="molecule type" value="Genomic_DNA"/>
</dbReference>
<dbReference type="RefSeq" id="WP_012256424.1">
    <property type="nucleotide sequence ID" value="NC_010175.1"/>
</dbReference>
<dbReference type="RefSeq" id="YP_001634157.1">
    <property type="nucleotide sequence ID" value="NC_010175.1"/>
</dbReference>
<dbReference type="SMR" id="A9WEA8"/>
<dbReference type="FunCoup" id="A9WEA8">
    <property type="interactions" value="265"/>
</dbReference>
<dbReference type="STRING" id="324602.Caur_0521"/>
<dbReference type="EnsemblBacteria" id="ABY33768">
    <property type="protein sequence ID" value="ABY33768"/>
    <property type="gene ID" value="Caur_0521"/>
</dbReference>
<dbReference type="KEGG" id="cau:Caur_0521"/>
<dbReference type="PATRIC" id="fig|324602.8.peg.591"/>
<dbReference type="eggNOG" id="COG0353">
    <property type="taxonomic scope" value="Bacteria"/>
</dbReference>
<dbReference type="HOGENOM" id="CLU_060739_1_0_0"/>
<dbReference type="InParanoid" id="A9WEA8"/>
<dbReference type="Proteomes" id="UP000002008">
    <property type="component" value="Chromosome"/>
</dbReference>
<dbReference type="GO" id="GO:0003677">
    <property type="term" value="F:DNA binding"/>
    <property type="evidence" value="ECO:0007669"/>
    <property type="project" value="UniProtKB-UniRule"/>
</dbReference>
<dbReference type="GO" id="GO:0008270">
    <property type="term" value="F:zinc ion binding"/>
    <property type="evidence" value="ECO:0007669"/>
    <property type="project" value="UniProtKB-KW"/>
</dbReference>
<dbReference type="GO" id="GO:0006302">
    <property type="term" value="P:double-strand break repair"/>
    <property type="evidence" value="ECO:0000318"/>
    <property type="project" value="GO_Central"/>
</dbReference>
<dbReference type="GO" id="GO:0000725">
    <property type="term" value="P:recombinational repair"/>
    <property type="evidence" value="ECO:0000318"/>
    <property type="project" value="GO_Central"/>
</dbReference>
<dbReference type="CDD" id="cd01025">
    <property type="entry name" value="TOPRIM_recR"/>
    <property type="match status" value="1"/>
</dbReference>
<dbReference type="Gene3D" id="3.30.60.80">
    <property type="match status" value="1"/>
</dbReference>
<dbReference type="Gene3D" id="3.40.1360.10">
    <property type="match status" value="1"/>
</dbReference>
<dbReference type="Gene3D" id="6.10.250.240">
    <property type="match status" value="1"/>
</dbReference>
<dbReference type="Gene3D" id="1.10.8.420">
    <property type="entry name" value="RecR Domain 1"/>
    <property type="match status" value="1"/>
</dbReference>
<dbReference type="HAMAP" id="MF_00017">
    <property type="entry name" value="RecR"/>
    <property type="match status" value="1"/>
</dbReference>
<dbReference type="InterPro" id="IPR000093">
    <property type="entry name" value="DNA_Rcmb_RecR"/>
</dbReference>
<dbReference type="InterPro" id="IPR023627">
    <property type="entry name" value="Rcmb_RecR"/>
</dbReference>
<dbReference type="InterPro" id="IPR015967">
    <property type="entry name" value="Rcmb_RecR_Znf"/>
</dbReference>
<dbReference type="InterPro" id="IPR006171">
    <property type="entry name" value="TOPRIM_dom"/>
</dbReference>
<dbReference type="InterPro" id="IPR034137">
    <property type="entry name" value="TOPRIM_RecR"/>
</dbReference>
<dbReference type="NCBIfam" id="TIGR00615">
    <property type="entry name" value="recR"/>
    <property type="match status" value="1"/>
</dbReference>
<dbReference type="PANTHER" id="PTHR30446">
    <property type="entry name" value="RECOMBINATION PROTEIN RECR"/>
    <property type="match status" value="1"/>
</dbReference>
<dbReference type="PANTHER" id="PTHR30446:SF0">
    <property type="entry name" value="RECOMBINATION PROTEIN RECR"/>
    <property type="match status" value="1"/>
</dbReference>
<dbReference type="Pfam" id="PF21175">
    <property type="entry name" value="RecR_C"/>
    <property type="match status" value="1"/>
</dbReference>
<dbReference type="Pfam" id="PF21176">
    <property type="entry name" value="RecR_HhH"/>
    <property type="match status" value="1"/>
</dbReference>
<dbReference type="Pfam" id="PF02132">
    <property type="entry name" value="RecR_ZnF"/>
    <property type="match status" value="1"/>
</dbReference>
<dbReference type="Pfam" id="PF13662">
    <property type="entry name" value="Toprim_4"/>
    <property type="match status" value="1"/>
</dbReference>
<dbReference type="SMART" id="SM00493">
    <property type="entry name" value="TOPRIM"/>
    <property type="match status" value="1"/>
</dbReference>
<dbReference type="SUPFAM" id="SSF111304">
    <property type="entry name" value="Recombination protein RecR"/>
    <property type="match status" value="1"/>
</dbReference>
<dbReference type="PROSITE" id="PS01300">
    <property type="entry name" value="RECR"/>
    <property type="match status" value="1"/>
</dbReference>
<dbReference type="PROSITE" id="PS50880">
    <property type="entry name" value="TOPRIM"/>
    <property type="match status" value="1"/>
</dbReference>
<feature type="chain" id="PRO_1000089713" description="Recombination protein RecR">
    <location>
        <begin position="1"/>
        <end position="204"/>
    </location>
</feature>
<feature type="domain" description="Toprim" evidence="1">
    <location>
        <begin position="86"/>
        <end position="181"/>
    </location>
</feature>
<feature type="zinc finger region" description="C4-type" evidence="1">
    <location>
        <begin position="63"/>
        <end position="78"/>
    </location>
</feature>
<gene>
    <name evidence="1" type="primary">recR</name>
    <name type="ordered locus">Caur_0521</name>
</gene>
<sequence length="204" mass="22496">MTVRTDQLIAAPVARLIEEFAKLPGIGPKTASRLTFYLLRAEPKQALALAQAILDVKEQVGYCRRCFNITVGELCAICLDPSRDQTKICVVEEPLDVLAIERTGAYRGLYHVLHGHIAPLEGIYREDLKIEELLARVRSEPVQEVILATNPNTEGEATAFLLLRDLAPLGVRVTRPARGLPTGGDLEWADPETLGSAFEGRREL</sequence>